<dbReference type="EC" id="2.4.1.207" evidence="1"/>
<dbReference type="EMBL" id="BT098780">
    <property type="protein sequence ID" value="ACU23972.1"/>
    <property type="molecule type" value="mRNA"/>
</dbReference>
<dbReference type="EMBL" id="D16455">
    <property type="protein sequence ID" value="BAA03922.1"/>
    <property type="molecule type" value="mRNA"/>
</dbReference>
<dbReference type="PIR" id="B49539">
    <property type="entry name" value="B49539"/>
</dbReference>
<dbReference type="RefSeq" id="NP_001242655.1">
    <property type="nucleotide sequence ID" value="NM_001255726.2"/>
</dbReference>
<dbReference type="SMR" id="Q39857"/>
<dbReference type="FunCoup" id="Q39857">
    <property type="interactions" value="120"/>
</dbReference>
<dbReference type="STRING" id="3847.Q39857"/>
<dbReference type="CAZy" id="GH16">
    <property type="family name" value="Glycoside Hydrolase Family 16"/>
</dbReference>
<dbReference type="GlyCosmos" id="Q39857">
    <property type="glycosylation" value="1 site, No reported glycans"/>
</dbReference>
<dbReference type="PaxDb" id="3847-GLYMA16G04950.1"/>
<dbReference type="GeneID" id="547775"/>
<dbReference type="KEGG" id="gmx:547775"/>
<dbReference type="eggNOG" id="ENOG502QQUC">
    <property type="taxonomic scope" value="Eukaryota"/>
</dbReference>
<dbReference type="HOGENOM" id="CLU_048041_0_0_1"/>
<dbReference type="InParanoid" id="Q39857"/>
<dbReference type="OrthoDB" id="4781at2759"/>
<dbReference type="Proteomes" id="UP000008827">
    <property type="component" value="Unplaced"/>
</dbReference>
<dbReference type="GO" id="GO:0048046">
    <property type="term" value="C:apoplast"/>
    <property type="evidence" value="ECO:0007669"/>
    <property type="project" value="UniProtKB-SubCell"/>
</dbReference>
<dbReference type="GO" id="GO:0004553">
    <property type="term" value="F:hydrolase activity, hydrolyzing O-glycosyl compounds"/>
    <property type="evidence" value="ECO:0007669"/>
    <property type="project" value="InterPro"/>
</dbReference>
<dbReference type="GO" id="GO:0030247">
    <property type="term" value="F:polysaccharide binding"/>
    <property type="evidence" value="ECO:0000250"/>
    <property type="project" value="UniProtKB"/>
</dbReference>
<dbReference type="GO" id="GO:0016762">
    <property type="term" value="F:xyloglucan:xyloglucosyl transferase activity"/>
    <property type="evidence" value="ECO:0007669"/>
    <property type="project" value="UniProtKB-EC"/>
</dbReference>
<dbReference type="GO" id="GO:0042546">
    <property type="term" value="P:cell wall biogenesis"/>
    <property type="evidence" value="ECO:0007669"/>
    <property type="project" value="InterPro"/>
</dbReference>
<dbReference type="GO" id="GO:0071555">
    <property type="term" value="P:cell wall organization"/>
    <property type="evidence" value="ECO:0007669"/>
    <property type="project" value="UniProtKB-KW"/>
</dbReference>
<dbReference type="GO" id="GO:0010411">
    <property type="term" value="P:xyloglucan metabolic process"/>
    <property type="evidence" value="ECO:0007669"/>
    <property type="project" value="InterPro"/>
</dbReference>
<dbReference type="CDD" id="cd02176">
    <property type="entry name" value="GH16_XET"/>
    <property type="match status" value="1"/>
</dbReference>
<dbReference type="FunFam" id="2.60.120.200:FF:000025">
    <property type="entry name" value="Xyloglucan endotransglucosylase/hydrolase"/>
    <property type="match status" value="1"/>
</dbReference>
<dbReference type="Gene3D" id="2.60.120.200">
    <property type="match status" value="1"/>
</dbReference>
<dbReference type="InterPro" id="IPR044791">
    <property type="entry name" value="Beta-glucanase/XTH"/>
</dbReference>
<dbReference type="InterPro" id="IPR013320">
    <property type="entry name" value="ConA-like_dom_sf"/>
</dbReference>
<dbReference type="InterPro" id="IPR000757">
    <property type="entry name" value="GH16"/>
</dbReference>
<dbReference type="InterPro" id="IPR008263">
    <property type="entry name" value="GH16_AS"/>
</dbReference>
<dbReference type="InterPro" id="IPR010713">
    <property type="entry name" value="XET_C"/>
</dbReference>
<dbReference type="InterPro" id="IPR016455">
    <property type="entry name" value="XTH"/>
</dbReference>
<dbReference type="PANTHER" id="PTHR31062">
    <property type="entry name" value="XYLOGLUCAN ENDOTRANSGLUCOSYLASE/HYDROLASE PROTEIN 8-RELATED"/>
    <property type="match status" value="1"/>
</dbReference>
<dbReference type="Pfam" id="PF00722">
    <property type="entry name" value="Glyco_hydro_16"/>
    <property type="match status" value="1"/>
</dbReference>
<dbReference type="Pfam" id="PF06955">
    <property type="entry name" value="XET_C"/>
    <property type="match status" value="1"/>
</dbReference>
<dbReference type="PIRSF" id="PIRSF005604">
    <property type="entry name" value="XET"/>
    <property type="match status" value="1"/>
</dbReference>
<dbReference type="SUPFAM" id="SSF49899">
    <property type="entry name" value="Concanavalin A-like lectins/glucanases"/>
    <property type="match status" value="1"/>
</dbReference>
<dbReference type="PROSITE" id="PS01034">
    <property type="entry name" value="GH16_1"/>
    <property type="match status" value="1"/>
</dbReference>
<dbReference type="PROSITE" id="PS51762">
    <property type="entry name" value="GH16_2"/>
    <property type="match status" value="1"/>
</dbReference>
<gene>
    <name evidence="8" type="primary">XTH1</name>
    <name evidence="7" type="synonym">EXT</name>
    <name evidence="8" type="synonym">XTH</name>
</gene>
<reference key="1">
    <citation type="submission" date="2009-08" db="EMBL/GenBank/DDBJ databases">
        <authorList>
            <person name="Cheung F."/>
            <person name="Xiao Y."/>
            <person name="Chan A."/>
            <person name="Moskal W."/>
            <person name="Town C.D."/>
        </authorList>
    </citation>
    <scope>NUCLEOTIDE SEQUENCE [MRNA]</scope>
</reference>
<reference key="2">
    <citation type="journal article" date="1993" name="J. Biol. Chem.">
        <title>Molecular cloning and cDNA sequencing of endoxyloglucan transferase, a novel class of glycosyltransferase that mediates molecular grafting between matrix polysaccharides in plant cell walls.</title>
        <authorList>
            <person name="Okazawa K."/>
            <person name="Sato Y."/>
            <person name="Nakagawa T."/>
            <person name="Asada K."/>
            <person name="Kato I."/>
            <person name="Tomita E."/>
            <person name="Nishitani K."/>
        </authorList>
    </citation>
    <scope>NUCLEOTIDE SEQUENCE [MRNA] OF 2-296</scope>
</reference>
<keyword id="KW-0052">Apoplast</keyword>
<keyword id="KW-0134">Cell wall</keyword>
<keyword id="KW-0961">Cell wall biogenesis/degradation</keyword>
<keyword id="KW-1015">Disulfide bond</keyword>
<keyword id="KW-0325">Glycoprotein</keyword>
<keyword id="KW-0326">Glycosidase</keyword>
<keyword id="KW-0378">Hydrolase</keyword>
<keyword id="KW-1185">Reference proteome</keyword>
<keyword id="KW-0964">Secreted</keyword>
<keyword id="KW-0732">Signal</keyword>
<keyword id="KW-0808">Transferase</keyword>
<accession>Q39857</accession>
<accession>C6TM30</accession>
<protein>
    <recommendedName>
        <fullName evidence="8">Xyloglucan endotransglucosylase/hydrolase 1</fullName>
        <ecNumber evidence="1">2.4.1.207</ecNumber>
    </recommendedName>
</protein>
<evidence type="ECO:0000250" key="1">
    <source>
        <dbReference type="UniProtKB" id="Q38857"/>
    </source>
</evidence>
<evidence type="ECO:0000250" key="2">
    <source>
        <dbReference type="UniProtKB" id="Q8GZD5"/>
    </source>
</evidence>
<evidence type="ECO:0000250" key="3">
    <source>
        <dbReference type="UniProtKB" id="Q9ZSU4"/>
    </source>
</evidence>
<evidence type="ECO:0000255" key="4"/>
<evidence type="ECO:0000255" key="5">
    <source>
        <dbReference type="PROSITE-ProRule" id="PRU01098"/>
    </source>
</evidence>
<evidence type="ECO:0000255" key="6">
    <source>
        <dbReference type="PROSITE-ProRule" id="PRU10064"/>
    </source>
</evidence>
<evidence type="ECO:0000303" key="7">
    <source>
    </source>
</evidence>
<evidence type="ECO:0000305" key="8"/>
<proteinExistence type="evidence at transcript level"/>
<comment type="function">
    <text evidence="1">Catalyzes xyloglucan endohydrolysis (XEH) and/or endotransglycosylation (XET). Cleaves and religates xyloglucan polymers, an essential constituent of the primary cell wall, and thereby participates in cell wall construction of growing tissues.</text>
</comment>
<comment type="catalytic activity">
    <reaction evidence="1">
        <text>breaks a beta-(1-&gt;4) bond in the backbone of a xyloglucan and transfers the xyloglucanyl segment on to O-4 of the non-reducing terminal glucose residue of an acceptor, which can be a xyloglucan or an oligosaccharide of xyloglucan.</text>
        <dbReference type="EC" id="2.4.1.207"/>
    </reaction>
</comment>
<comment type="subcellular location">
    <subcellularLocation>
        <location evidence="8">Secreted</location>
        <location evidence="8">Cell wall</location>
    </subcellularLocation>
    <subcellularLocation>
        <location evidence="8">Secreted</location>
        <location evidence="8">Extracellular space</location>
        <location evidence="8">Apoplast</location>
    </subcellularLocation>
</comment>
<comment type="PTM">
    <text evidence="1">Contains at least one intrachain disulfide bond essential for its enzymatic activity.</text>
</comment>
<comment type="PTM">
    <text evidence="3">N-glycosylated; not essential for its enzymatic activity.</text>
</comment>
<comment type="similarity">
    <text evidence="8">Belongs to the glycosyl hydrolase 16 family. XTH group 1 subfamily.</text>
</comment>
<organism>
    <name type="scientific">Glycine max</name>
    <name type="common">Soybean</name>
    <name type="synonym">Glycine hispida</name>
    <dbReference type="NCBI Taxonomy" id="3847"/>
    <lineage>
        <taxon>Eukaryota</taxon>
        <taxon>Viridiplantae</taxon>
        <taxon>Streptophyta</taxon>
        <taxon>Embryophyta</taxon>
        <taxon>Tracheophyta</taxon>
        <taxon>Spermatophyta</taxon>
        <taxon>Magnoliopsida</taxon>
        <taxon>eudicotyledons</taxon>
        <taxon>Gunneridae</taxon>
        <taxon>Pentapetalae</taxon>
        <taxon>rosids</taxon>
        <taxon>fabids</taxon>
        <taxon>Fabales</taxon>
        <taxon>Fabaceae</taxon>
        <taxon>Papilionoideae</taxon>
        <taxon>50 kb inversion clade</taxon>
        <taxon>NPAAA clade</taxon>
        <taxon>indigoferoid/millettioid clade</taxon>
        <taxon>Phaseoleae</taxon>
        <taxon>Glycine</taxon>
        <taxon>Glycine subgen. Soja</taxon>
    </lineage>
</organism>
<sequence>MGSSSSMWTVCVILASLASAALCANPRRPVDVQFGRNYVPTWAFDHIKYFNGGSDIQPHLDKYTGTGFQPKGSYLFGHFSMYIKMVPGDSAGTVTAFYLSSQNAEHDEIDFEFLGNRTGQPYILQTNVFTGGKGDREQRIYLWFDPTKEYHRYSILWNLYQIVFFVDEVPIRVFKNSKDLGVKFPFDQPMKIYNSLWNADDWATRGGLEKTDWSKAPFIAAYKGFHIDGCEASVNAKFCDTQGKRWWDQPEFRDLDAAQWRRLRWVRQKYTIYNYCTDTKRYPHISPPECKRDRDI</sequence>
<feature type="signal peptide" evidence="4">
    <location>
        <begin position="1"/>
        <end position="23"/>
    </location>
</feature>
<feature type="chain" id="PRO_0000011839" description="Xyloglucan endotransglucosylase/hydrolase 1" evidence="8">
    <location>
        <begin position="24"/>
        <end position="296"/>
    </location>
</feature>
<feature type="domain" description="GH16" evidence="5">
    <location>
        <begin position="24"/>
        <end position="222"/>
    </location>
</feature>
<feature type="active site" description="Nucleophile" evidence="6">
    <location>
        <position position="108"/>
    </location>
</feature>
<feature type="active site" description="Proton donor" evidence="6">
    <location>
        <position position="112"/>
    </location>
</feature>
<feature type="binding site" evidence="2">
    <location>
        <position position="112"/>
    </location>
    <ligand>
        <name>xyloglucan</name>
        <dbReference type="ChEBI" id="CHEBI:18233"/>
    </ligand>
</feature>
<feature type="binding site" evidence="2">
    <location>
        <begin position="125"/>
        <end position="127"/>
    </location>
    <ligand>
        <name>xyloglucan</name>
        <dbReference type="ChEBI" id="CHEBI:18233"/>
    </ligand>
</feature>
<feature type="binding site" evidence="2">
    <location>
        <begin position="135"/>
        <end position="137"/>
    </location>
    <ligand>
        <name>xyloglucan</name>
        <dbReference type="ChEBI" id="CHEBI:18233"/>
    </ligand>
</feature>
<feature type="binding site" evidence="2">
    <location>
        <begin position="201"/>
        <end position="202"/>
    </location>
    <ligand>
        <name>xyloglucan</name>
        <dbReference type="ChEBI" id="CHEBI:18233"/>
    </ligand>
</feature>
<feature type="binding site" evidence="2">
    <location>
        <position position="206"/>
    </location>
    <ligand>
        <name>xyloglucan</name>
        <dbReference type="ChEBI" id="CHEBI:18233"/>
    </ligand>
</feature>
<feature type="binding site" evidence="2">
    <location>
        <position position="281"/>
    </location>
    <ligand>
        <name>xyloglucan</name>
        <dbReference type="ChEBI" id="CHEBI:18233"/>
    </ligand>
</feature>
<feature type="site" description="Important for catalytic activity" evidence="2">
    <location>
        <position position="110"/>
    </location>
</feature>
<feature type="glycosylation site" description="N-linked (GlcNAc...) asparagine" evidence="4">
    <location>
        <position position="116"/>
    </location>
</feature>
<feature type="disulfide bond" evidence="2">
    <location>
        <begin position="230"/>
        <end position="239"/>
    </location>
</feature>
<feature type="disulfide bond" evidence="2">
    <location>
        <begin position="276"/>
        <end position="290"/>
    </location>
</feature>
<feature type="sequence conflict" description="In Ref. 2; BAA03922." evidence="8" ref="2">
    <original>GSSS</original>
    <variation>IPVF</variation>
    <location>
        <begin position="2"/>
        <end position="5"/>
    </location>
</feature>
<feature type="sequence conflict" description="In Ref. 2; BAA03922." evidence="8" ref="2">
    <original>M</original>
    <variation>V</variation>
    <location>
        <position position="7"/>
    </location>
</feature>
<feature type="sequence conflict" description="In Ref. 2; BAA03922." evidence="8" ref="2">
    <original>P</original>
    <variation>L</variation>
    <location>
        <position position="58"/>
    </location>
</feature>
<feature type="sequence conflict" description="In Ref. 2; BAA03922." evidence="8" ref="2">
    <original>P</original>
    <variation>S</variation>
    <location>
        <position position="70"/>
    </location>
</feature>
<name>XTH1_SOYBN</name>